<keyword id="KW-0963">Cytoplasm</keyword>
<keyword id="KW-0206">Cytoskeleton</keyword>
<keyword id="KW-0254">Endocytosis</keyword>
<keyword id="KW-0256">Endoplasmic reticulum</keyword>
<keyword id="KW-0378">Hydrolase</keyword>
<keyword id="KW-0479">Metal-binding</keyword>
<keyword id="KW-0597">Phosphoprotein</keyword>
<keyword id="KW-0645">Protease</keyword>
<keyword id="KW-1185">Reference proteome</keyword>
<keyword id="KW-0677">Repeat</keyword>
<keyword id="KW-0788">Thiol protease</keyword>
<keyword id="KW-0832">Ubl conjugation</keyword>
<keyword id="KW-0833">Ubl conjugation pathway</keyword>
<keyword id="KW-0862">Zinc</keyword>
<keyword id="KW-0863">Zinc-finger</keyword>
<feature type="chain" id="PRO_0000390419" description="Ubiquitin carboxyl-terminal hydrolase 20">
    <location>
        <begin position="1"/>
        <end position="913"/>
    </location>
</feature>
<feature type="domain" description="USP">
    <location>
        <begin position="144"/>
        <end position="684"/>
    </location>
</feature>
<feature type="domain" description="DUSP 1" evidence="5">
    <location>
        <begin position="686"/>
        <end position="779"/>
    </location>
</feature>
<feature type="domain" description="DUSP 2" evidence="5">
    <location>
        <begin position="788"/>
        <end position="891"/>
    </location>
</feature>
<feature type="zinc finger region" description="UBP-type" evidence="4">
    <location>
        <begin position="6"/>
        <end position="111"/>
    </location>
</feature>
<feature type="region of interest" description="Disordered" evidence="8">
    <location>
        <begin position="256"/>
        <end position="414"/>
    </location>
</feature>
<feature type="compositionally biased region" description="Basic and acidic residues" evidence="8">
    <location>
        <begin position="258"/>
        <end position="278"/>
    </location>
</feature>
<feature type="compositionally biased region" description="Basic and acidic residues" evidence="8">
    <location>
        <begin position="315"/>
        <end position="331"/>
    </location>
</feature>
<feature type="active site" description="Nucleophile" evidence="6 7">
    <location>
        <position position="153"/>
    </location>
</feature>
<feature type="active site" description="Proton acceptor" evidence="6 7">
    <location>
        <position position="642"/>
    </location>
</feature>
<feature type="binding site" evidence="4">
    <location>
        <position position="8"/>
    </location>
    <ligand>
        <name>Zn(2+)</name>
        <dbReference type="ChEBI" id="CHEBI:29105"/>
        <label>1</label>
    </ligand>
</feature>
<feature type="binding site" evidence="4">
    <location>
        <position position="10"/>
    </location>
    <ligand>
        <name>Zn(2+)</name>
        <dbReference type="ChEBI" id="CHEBI:29105"/>
        <label>1</label>
    </ligand>
</feature>
<feature type="binding site" evidence="4">
    <location>
        <position position="30"/>
    </location>
    <ligand>
        <name>Zn(2+)</name>
        <dbReference type="ChEBI" id="CHEBI:29105"/>
        <label>2</label>
    </ligand>
</feature>
<feature type="binding site" evidence="4">
    <location>
        <position position="33"/>
    </location>
    <ligand>
        <name>Zn(2+)</name>
        <dbReference type="ChEBI" id="CHEBI:29105"/>
        <label>2</label>
    </ligand>
</feature>
<feature type="binding site" evidence="4">
    <location>
        <position position="43"/>
    </location>
    <ligand>
        <name>Zn(2+)</name>
        <dbReference type="ChEBI" id="CHEBI:29105"/>
        <label>3</label>
    </ligand>
</feature>
<feature type="binding site" evidence="4">
    <location>
        <position position="48"/>
    </location>
    <ligand>
        <name>Zn(2+)</name>
        <dbReference type="ChEBI" id="CHEBI:29105"/>
        <label>3</label>
    </ligand>
</feature>
<feature type="binding site" evidence="4">
    <location>
        <position position="53"/>
    </location>
    <ligand>
        <name>Zn(2+)</name>
        <dbReference type="ChEBI" id="CHEBI:29105"/>
        <label>2</label>
    </ligand>
</feature>
<feature type="binding site" evidence="4">
    <location>
        <position position="60"/>
    </location>
    <ligand>
        <name>Zn(2+)</name>
        <dbReference type="ChEBI" id="CHEBI:29105"/>
        <label>2</label>
    </ligand>
</feature>
<feature type="binding site" evidence="4">
    <location>
        <position position="64"/>
    </location>
    <ligand>
        <name>Zn(2+)</name>
        <dbReference type="ChEBI" id="CHEBI:29105"/>
        <label>3</label>
    </ligand>
</feature>
<feature type="binding site" evidence="4">
    <location>
        <position position="70"/>
    </location>
    <ligand>
        <name>Zn(2+)</name>
        <dbReference type="ChEBI" id="CHEBI:29105"/>
        <label>3</label>
    </ligand>
</feature>
<feature type="binding site" evidence="4">
    <location>
        <position position="83"/>
    </location>
    <ligand>
        <name>Zn(2+)</name>
        <dbReference type="ChEBI" id="CHEBI:29105"/>
        <label>1</label>
    </ligand>
</feature>
<feature type="binding site" evidence="4">
    <location>
        <position position="86"/>
    </location>
    <ligand>
        <name>Zn(2+)</name>
        <dbReference type="ChEBI" id="CHEBI:29105"/>
        <label>1</label>
    </ligand>
</feature>
<feature type="modified residue" description="Phosphoserine" evidence="3">
    <location>
        <position position="111"/>
    </location>
</feature>
<feature type="modified residue" description="Phosphoserine" evidence="3">
    <location>
        <position position="131"/>
    </location>
</feature>
<feature type="modified residue" description="Phosphoserine" evidence="3">
    <location>
        <position position="133"/>
    </location>
</feature>
<feature type="modified residue" description="Phosphothreonine" evidence="3">
    <location>
        <position position="257"/>
    </location>
</feature>
<feature type="modified residue" description="Phosphoserine" evidence="3">
    <location>
        <position position="304"/>
    </location>
</feature>
<feature type="modified residue" description="Phosphoserine" evidence="2">
    <location>
        <position position="367"/>
    </location>
</feature>
<feature type="modified residue" description="Phosphothreonine" evidence="3">
    <location>
        <position position="376"/>
    </location>
</feature>
<feature type="modified residue" description="Phosphoserine" evidence="3">
    <location>
        <position position="407"/>
    </location>
</feature>
<feature type="modified residue" description="Phosphoserine" evidence="3">
    <location>
        <position position="412"/>
    </location>
</feature>
<sequence length="913" mass="101851">MGDSRDLCPHLDSIGEVTKEDLLLKSMGTCQSCGVTGPNLWACLQVACPYVGCGESFADHSTIHAQAKKHNLTVNLTTFRLWCYACEKEVFLEQRLAAPLLGSSKFSEQDSPPPSHPLKAVPIAVADEGESESEDDDLKPRGLTGMKNLGNSCYMNAALQALSNCPPLTQFFLECGGLVRTDKKPALCKSYQKLVSEVWHKKRPSYVVPTSLSHGIKLVNPMFRGYAQQDTQEFLRCLMDQLHEELKEPVVATVALTEARDSDSSDTDEKREGDRSPSEDEFLSCDSSSDRGEGDGQGRGGGSSQAETELLIPDEASRAISEKERMKDRKFSWGQQRTNSEQVDEDADVDTTMAALDDQPAEAQPPSPRSSSPCRTPEPDNDAHLCSSSRPCSPVHHHEGHAKLSSSPPRASPVRMAPSYVLKKAQVLSAGSRRRKEQRYRSVISDIFDGSILSLVQCLTCDRVSATVETFQDLSLPIPGKEDLAKLHSAIYQNVPAKPGTCGDSYAAQGWLAFIVEYIRRFVVSCTPSWFWGPVVTLEDCLAAFFAADELKGDNMYSCERCKKLRNGVKYCKVLRLPEILCIHLKRFRHEVMYSFKINSHVSFPLEGLDLRPFLAKECTSQITTYDLLSVICHHGTAGSGHYIAYCQNVINGQWYEFDDQYVTEVHETVVQNAEGYVLFYRKSSEEAVRERQQVVSLAAMREPSLLRFYVSREWLNKFNTFAEPGPITNQTFLCSHGGIPPHKYHYIDDLVVILPQNVWEHLYNRFGGGPAVNHLYVCSICQVEIEALAKRRRIEIDTFIKLNKAFQAEESPGIIYCISMQWFREWEAFVKGKDNEPPGPIDNSRIAQVKGSGHVQLKQGADYGQISEETWTYLNSLYGGGPEIAIRQSVAQPLGPESLHGEQKIEAEARAV</sequence>
<protein>
    <recommendedName>
        <fullName>Ubiquitin carboxyl-terminal hydrolase 20</fullName>
        <ecNumber>3.4.19.12</ecNumber>
    </recommendedName>
    <alternativeName>
        <fullName>Deubiquitinating enzyme 20</fullName>
    </alternativeName>
    <alternativeName>
        <fullName>Ubiquitin thioesterase 20</fullName>
    </alternativeName>
    <alternativeName>
        <fullName>Ubiquitin-specific-processing protease 20</fullName>
    </alternativeName>
</protein>
<comment type="function">
    <text evidence="3">Deubiquitinating enzyme that plays a role in many cellular processes including autophagy, cellular antiviral response or membrane protein biogenesis. Attenuates TLR4-mediated NF-kappa-B signaling by cooperating with beta-arrestin-2/ARRB2 and inhibiting TRAF6 autoubiquitination. Promotes cellular antiviral responses by deconjugating 'Lys-33' and 'Lys-48'-linked ubiquitination of STING1 leading to its stabilization. Plays an essential role in autophagy induction by regulating the ULK1 stability through deubiquitination of ULK1. Acts as a positive regulator for NF-kappa-B activation by TNF-alpha through deubiquitinating 'Lys-48'-linked polyubiquitination of SQSTM1, leading to its increased stability. Acts as a regulator of G-protein coupled receptor (GPCR) signaling by mediating the deubiquitination beta-2 adrenergic receptor (ADRB2). Plays a central role in ADRB2 recycling and resensitization after prolonged agonist stimulation by constitutively binding ADRB2, mediating deubiquitination of ADRB2 and inhibiting lysosomal trafficking of ADRB2. Upon dissociation, it is probably transferred to the translocated beta-arrestins, possibly leading to beta-arrestins deubiquitination and disengagement from ADRB2. This suggests the existence of a dynamic exchange between the ADRB2 and beta-arrestins. Deubiquitinates DIO2, thereby regulating thyroid hormone regulation. Deubiquitinates HIF1A, leading to stabilize HIF1A and enhance HIF1A-mediated activity. Deubiquitinates MCL1, a pivotal member of the anti-apoptotic Bcl-2 protein family to regulate its stability. Within the endoplasmic reticulum, participates with USP33 in the rescue of post-translationally targeted membrane proteins that are inappropriately ubiquitinated by the cytosolic protein quality control in the cytosol.</text>
</comment>
<comment type="catalytic activity">
    <reaction evidence="3">
        <text>Thiol-dependent hydrolysis of ester, thioester, amide, peptide and isopeptide bonds formed by the C-terminal Gly of ubiquitin (a 76-residue protein attached to proteins as an intracellular targeting signal).</text>
        <dbReference type="EC" id="3.4.19.12"/>
    </reaction>
</comment>
<comment type="subunit">
    <text evidence="3">Interacts with VHL, leading to its ubiquitination and subsequent degradation. Interacts with CCP110. Interacts with DIO2. Interacts with HIF1A. Interacts with ADRB2. Interacts with USP18.</text>
</comment>
<comment type="subcellular location">
    <subcellularLocation>
        <location evidence="2">Cytoplasm</location>
    </subcellularLocation>
    <subcellularLocation>
        <location evidence="3">Endoplasmic reticulum</location>
    </subcellularLocation>
    <subcellularLocation>
        <location evidence="3">Cytoplasm</location>
        <location evidence="3">Perinuclear region</location>
    </subcellularLocation>
    <subcellularLocation>
        <location evidence="3">Cytoplasm</location>
        <location evidence="3">Cytoskeleton</location>
        <location evidence="3">Microtubule organizing center</location>
        <location evidence="3">Centrosome</location>
    </subcellularLocation>
</comment>
<comment type="domain">
    <text evidence="1">The UBP-type zinc finger binds 3 zinc ions. However, it does not bind ubiquitin, probably because the conserved Arg in position 55 is replaced by a Glu residue (By similarity).</text>
</comment>
<comment type="PTM">
    <text evidence="1">Ubiquitinated via a VHL-dependent pathway for proteasomal degradation.</text>
</comment>
<comment type="similarity">
    <text evidence="9">Belongs to the peptidase C19 family. USP20/USP33 subfamily.</text>
</comment>
<dbReference type="EC" id="3.4.19.12"/>
<dbReference type="EMBL" id="CR860704">
    <property type="protein sequence ID" value="CAH92820.1"/>
    <property type="molecule type" value="mRNA"/>
</dbReference>
<dbReference type="RefSeq" id="NP_001126647.1">
    <property type="nucleotide sequence ID" value="NM_001133175.1"/>
</dbReference>
<dbReference type="FunCoup" id="Q5R5Z6">
    <property type="interactions" value="1306"/>
</dbReference>
<dbReference type="STRING" id="9601.ENSPPYP00000022065"/>
<dbReference type="MEROPS" id="C19.025"/>
<dbReference type="GeneID" id="100173645"/>
<dbReference type="KEGG" id="pon:100173645"/>
<dbReference type="CTD" id="10868"/>
<dbReference type="eggNOG" id="KOG1870">
    <property type="taxonomic scope" value="Eukaryota"/>
</dbReference>
<dbReference type="InParanoid" id="Q5R5Z6"/>
<dbReference type="OrthoDB" id="73004at2759"/>
<dbReference type="Proteomes" id="UP000001595">
    <property type="component" value="Unplaced"/>
</dbReference>
<dbReference type="GO" id="GO:0005813">
    <property type="term" value="C:centrosome"/>
    <property type="evidence" value="ECO:0000250"/>
    <property type="project" value="UniProtKB"/>
</dbReference>
<dbReference type="GO" id="GO:0005783">
    <property type="term" value="C:endoplasmic reticulum"/>
    <property type="evidence" value="ECO:0007669"/>
    <property type="project" value="UniProtKB-SubCell"/>
</dbReference>
<dbReference type="GO" id="GO:0048471">
    <property type="term" value="C:perinuclear region of cytoplasm"/>
    <property type="evidence" value="ECO:0007669"/>
    <property type="project" value="UniProtKB-SubCell"/>
</dbReference>
<dbReference type="GO" id="GO:0004843">
    <property type="term" value="F:cysteine-type deubiquitinase activity"/>
    <property type="evidence" value="ECO:0000250"/>
    <property type="project" value="UniProtKB"/>
</dbReference>
<dbReference type="GO" id="GO:0004197">
    <property type="term" value="F:cysteine-type endopeptidase activity"/>
    <property type="evidence" value="ECO:0000250"/>
    <property type="project" value="UniProtKB"/>
</dbReference>
<dbReference type="GO" id="GO:0008270">
    <property type="term" value="F:zinc ion binding"/>
    <property type="evidence" value="ECO:0007669"/>
    <property type="project" value="UniProtKB-KW"/>
</dbReference>
<dbReference type="GO" id="GO:0006897">
    <property type="term" value="P:endocytosis"/>
    <property type="evidence" value="ECO:0007669"/>
    <property type="project" value="UniProtKB-KW"/>
</dbReference>
<dbReference type="GO" id="GO:0016579">
    <property type="term" value="P:protein deubiquitination"/>
    <property type="evidence" value="ECO:0000250"/>
    <property type="project" value="UniProtKB"/>
</dbReference>
<dbReference type="GO" id="GO:0071108">
    <property type="term" value="P:protein K48-linked deubiquitination"/>
    <property type="evidence" value="ECO:0000250"/>
    <property type="project" value="UniProtKB"/>
</dbReference>
<dbReference type="GO" id="GO:0070536">
    <property type="term" value="P:protein K63-linked deubiquitination"/>
    <property type="evidence" value="ECO:0000250"/>
    <property type="project" value="UniProtKB"/>
</dbReference>
<dbReference type="GO" id="GO:0006508">
    <property type="term" value="P:proteolysis"/>
    <property type="evidence" value="ECO:0007669"/>
    <property type="project" value="UniProtKB-KW"/>
</dbReference>
<dbReference type="GO" id="GO:0008277">
    <property type="term" value="P:regulation of G protein-coupled receptor signaling pathway"/>
    <property type="evidence" value="ECO:0000250"/>
    <property type="project" value="UniProtKB"/>
</dbReference>
<dbReference type="CDD" id="cd02674">
    <property type="entry name" value="Peptidase_C19R"/>
    <property type="match status" value="1"/>
</dbReference>
<dbReference type="FunFam" id="3.30.2230.10:FF:000001">
    <property type="entry name" value="Ubiquitinyl hydrolase 1"/>
    <property type="match status" value="1"/>
</dbReference>
<dbReference type="FunFam" id="3.30.2230.10:FF:000002">
    <property type="entry name" value="Ubiquitinyl hydrolase 1"/>
    <property type="match status" value="1"/>
</dbReference>
<dbReference type="FunFam" id="3.30.40.10:FF:000065">
    <property type="entry name" value="Ubiquitinyl hydrolase 1"/>
    <property type="match status" value="1"/>
</dbReference>
<dbReference type="FunFam" id="3.90.70.10:FF:000120">
    <property type="entry name" value="Ubiquitinyl hydrolase 1"/>
    <property type="match status" value="1"/>
</dbReference>
<dbReference type="Gene3D" id="3.90.70.10">
    <property type="entry name" value="Cysteine proteinases"/>
    <property type="match status" value="2"/>
</dbReference>
<dbReference type="Gene3D" id="3.30.2230.10">
    <property type="entry name" value="DUSP-like"/>
    <property type="match status" value="2"/>
</dbReference>
<dbReference type="Gene3D" id="3.30.40.10">
    <property type="entry name" value="Zinc/RING finger domain, C3HC4 (zinc finger)"/>
    <property type="match status" value="1"/>
</dbReference>
<dbReference type="InterPro" id="IPR035927">
    <property type="entry name" value="DUSP-like_sf"/>
</dbReference>
<dbReference type="InterPro" id="IPR038765">
    <property type="entry name" value="Papain-like_cys_pep_sf"/>
</dbReference>
<dbReference type="InterPro" id="IPR006615">
    <property type="entry name" value="Pept_C19_DUSP"/>
</dbReference>
<dbReference type="InterPro" id="IPR001394">
    <property type="entry name" value="Peptidase_C19_UCH"/>
</dbReference>
<dbReference type="InterPro" id="IPR050185">
    <property type="entry name" value="Ub_carboxyl-term_hydrolase"/>
</dbReference>
<dbReference type="InterPro" id="IPR018200">
    <property type="entry name" value="USP_CS"/>
</dbReference>
<dbReference type="InterPro" id="IPR028889">
    <property type="entry name" value="USP_dom"/>
</dbReference>
<dbReference type="InterPro" id="IPR013083">
    <property type="entry name" value="Znf_RING/FYVE/PHD"/>
</dbReference>
<dbReference type="InterPro" id="IPR001607">
    <property type="entry name" value="Znf_UBP"/>
</dbReference>
<dbReference type="PANTHER" id="PTHR21646">
    <property type="entry name" value="UBIQUITIN CARBOXYL-TERMINAL HYDROLASE"/>
    <property type="match status" value="1"/>
</dbReference>
<dbReference type="PANTHER" id="PTHR21646:SF13">
    <property type="entry name" value="UBIQUITIN CARBOXYL-TERMINAL HYDROLASE 20"/>
    <property type="match status" value="1"/>
</dbReference>
<dbReference type="Pfam" id="PF06337">
    <property type="entry name" value="DUSP"/>
    <property type="match status" value="2"/>
</dbReference>
<dbReference type="Pfam" id="PF00443">
    <property type="entry name" value="UCH"/>
    <property type="match status" value="1"/>
</dbReference>
<dbReference type="Pfam" id="PF02148">
    <property type="entry name" value="zf-UBP"/>
    <property type="match status" value="1"/>
</dbReference>
<dbReference type="SMART" id="SM00695">
    <property type="entry name" value="DUSP"/>
    <property type="match status" value="2"/>
</dbReference>
<dbReference type="SMART" id="SM00290">
    <property type="entry name" value="ZnF_UBP"/>
    <property type="match status" value="1"/>
</dbReference>
<dbReference type="SUPFAM" id="SSF54001">
    <property type="entry name" value="Cysteine proteinases"/>
    <property type="match status" value="1"/>
</dbReference>
<dbReference type="SUPFAM" id="SSF143791">
    <property type="entry name" value="DUSP-like"/>
    <property type="match status" value="2"/>
</dbReference>
<dbReference type="SUPFAM" id="SSF57850">
    <property type="entry name" value="RING/U-box"/>
    <property type="match status" value="1"/>
</dbReference>
<dbReference type="PROSITE" id="PS51283">
    <property type="entry name" value="DUSP"/>
    <property type="match status" value="2"/>
</dbReference>
<dbReference type="PROSITE" id="PS00972">
    <property type="entry name" value="USP_1"/>
    <property type="match status" value="1"/>
</dbReference>
<dbReference type="PROSITE" id="PS00973">
    <property type="entry name" value="USP_2"/>
    <property type="match status" value="1"/>
</dbReference>
<dbReference type="PROSITE" id="PS50235">
    <property type="entry name" value="USP_3"/>
    <property type="match status" value="1"/>
</dbReference>
<dbReference type="PROSITE" id="PS50271">
    <property type="entry name" value="ZF_UBP"/>
    <property type="match status" value="1"/>
</dbReference>
<reference key="1">
    <citation type="submission" date="2004-11" db="EMBL/GenBank/DDBJ databases">
        <authorList>
            <consortium name="The German cDNA consortium"/>
        </authorList>
    </citation>
    <scope>NUCLEOTIDE SEQUENCE [LARGE SCALE MRNA]</scope>
    <source>
        <tissue>Brain cortex</tissue>
    </source>
</reference>
<evidence type="ECO:0000250" key="1"/>
<evidence type="ECO:0000250" key="2">
    <source>
        <dbReference type="UniProtKB" id="Q8C6M1"/>
    </source>
</evidence>
<evidence type="ECO:0000250" key="3">
    <source>
        <dbReference type="UniProtKB" id="Q9Y2K6"/>
    </source>
</evidence>
<evidence type="ECO:0000255" key="4">
    <source>
        <dbReference type="PROSITE-ProRule" id="PRU00502"/>
    </source>
</evidence>
<evidence type="ECO:0000255" key="5">
    <source>
        <dbReference type="PROSITE-ProRule" id="PRU00613"/>
    </source>
</evidence>
<evidence type="ECO:0000255" key="6">
    <source>
        <dbReference type="PROSITE-ProRule" id="PRU10092"/>
    </source>
</evidence>
<evidence type="ECO:0000255" key="7">
    <source>
        <dbReference type="PROSITE-ProRule" id="PRU10093"/>
    </source>
</evidence>
<evidence type="ECO:0000256" key="8">
    <source>
        <dbReference type="SAM" id="MobiDB-lite"/>
    </source>
</evidence>
<evidence type="ECO:0000305" key="9"/>
<name>UBP20_PONAB</name>
<gene>
    <name type="primary">USP20</name>
</gene>
<proteinExistence type="evidence at transcript level"/>
<organism>
    <name type="scientific">Pongo abelii</name>
    <name type="common">Sumatran orangutan</name>
    <name type="synonym">Pongo pygmaeus abelii</name>
    <dbReference type="NCBI Taxonomy" id="9601"/>
    <lineage>
        <taxon>Eukaryota</taxon>
        <taxon>Metazoa</taxon>
        <taxon>Chordata</taxon>
        <taxon>Craniata</taxon>
        <taxon>Vertebrata</taxon>
        <taxon>Euteleostomi</taxon>
        <taxon>Mammalia</taxon>
        <taxon>Eutheria</taxon>
        <taxon>Euarchontoglires</taxon>
        <taxon>Primates</taxon>
        <taxon>Haplorrhini</taxon>
        <taxon>Catarrhini</taxon>
        <taxon>Hominidae</taxon>
        <taxon>Pongo</taxon>
    </lineage>
</organism>
<accession>Q5R5Z6</accession>